<name>GCSHL_CHLTR</name>
<gene>
    <name evidence="3" type="primary">gcsH</name>
    <name type="ordered locus">CT_282</name>
</gene>
<organism>
    <name type="scientific">Chlamydia trachomatis serovar D (strain ATCC VR-885 / DSM 19411 / UW-3/Cx)</name>
    <dbReference type="NCBI Taxonomy" id="272561"/>
    <lineage>
        <taxon>Bacteria</taxon>
        <taxon>Pseudomonadati</taxon>
        <taxon>Chlamydiota</taxon>
        <taxon>Chlamydiia</taxon>
        <taxon>Chlamydiales</taxon>
        <taxon>Chlamydiaceae</taxon>
        <taxon>Chlamydia/Chlamydophila group</taxon>
        <taxon>Chlamydia</taxon>
    </lineage>
</organism>
<proteinExistence type="inferred from homology"/>
<sequence length="117" mass="13144">MKGKKYYSDYHVWIEPIHSRIVKLGLSSQMREHLGNILHIDLPSLGAFIKEGEKLCILESSKSAIEVLSPVSGEVLEVNTALEDDILPVNNATESEGWFVVLQLTEDFRSESFSLEP</sequence>
<keyword id="KW-0450">Lipoyl</keyword>
<keyword id="KW-1185">Reference proteome</keyword>
<protein>
    <recommendedName>
        <fullName evidence="2">Glycine cleavage system H-like protein</fullName>
    </recommendedName>
</protein>
<dbReference type="EMBL" id="AE001273">
    <property type="protein sequence ID" value="AAC67875.1"/>
    <property type="molecule type" value="Genomic_DNA"/>
</dbReference>
<dbReference type="PIR" id="G71535">
    <property type="entry name" value="G71535"/>
</dbReference>
<dbReference type="RefSeq" id="NP_219787.1">
    <property type="nucleotide sequence ID" value="NC_000117.1"/>
</dbReference>
<dbReference type="RefSeq" id="WP_009871629.1">
    <property type="nucleotide sequence ID" value="NC_000117.1"/>
</dbReference>
<dbReference type="SMR" id="O84284"/>
<dbReference type="FunCoup" id="O84284">
    <property type="interactions" value="231"/>
</dbReference>
<dbReference type="STRING" id="272561.CT_282"/>
<dbReference type="EnsemblBacteria" id="AAC67875">
    <property type="protein sequence ID" value="AAC67875"/>
    <property type="gene ID" value="CT_282"/>
</dbReference>
<dbReference type="GeneID" id="884837"/>
<dbReference type="KEGG" id="ctr:CT_282"/>
<dbReference type="PATRIC" id="fig|272561.5.peg.301"/>
<dbReference type="HOGENOM" id="CLU_097408_2_4_0"/>
<dbReference type="InParanoid" id="O84284"/>
<dbReference type="OrthoDB" id="9796712at2"/>
<dbReference type="Proteomes" id="UP000000431">
    <property type="component" value="Chromosome"/>
</dbReference>
<dbReference type="GO" id="GO:0005829">
    <property type="term" value="C:cytosol"/>
    <property type="evidence" value="ECO:0000318"/>
    <property type="project" value="GO_Central"/>
</dbReference>
<dbReference type="GO" id="GO:0005960">
    <property type="term" value="C:glycine cleavage complex"/>
    <property type="evidence" value="ECO:0007669"/>
    <property type="project" value="InterPro"/>
</dbReference>
<dbReference type="GO" id="GO:0019464">
    <property type="term" value="P:glycine decarboxylation via glycine cleavage system"/>
    <property type="evidence" value="ECO:0007669"/>
    <property type="project" value="InterPro"/>
</dbReference>
<dbReference type="CDD" id="cd06848">
    <property type="entry name" value="GCS_H"/>
    <property type="match status" value="1"/>
</dbReference>
<dbReference type="Gene3D" id="2.40.50.100">
    <property type="match status" value="1"/>
</dbReference>
<dbReference type="InterPro" id="IPR003016">
    <property type="entry name" value="2-oxoA_DH_lipoyl-BS"/>
</dbReference>
<dbReference type="InterPro" id="IPR000089">
    <property type="entry name" value="Biotin_lipoyl"/>
</dbReference>
<dbReference type="InterPro" id="IPR002930">
    <property type="entry name" value="GCV_H"/>
</dbReference>
<dbReference type="InterPro" id="IPR033753">
    <property type="entry name" value="GCV_H/Fam206"/>
</dbReference>
<dbReference type="InterPro" id="IPR017514">
    <property type="entry name" value="GcvH_Chlamydia"/>
</dbReference>
<dbReference type="InterPro" id="IPR011053">
    <property type="entry name" value="Single_hybrid_motif"/>
</dbReference>
<dbReference type="NCBIfam" id="TIGR03077">
    <property type="entry name" value="not_gcvH"/>
    <property type="match status" value="1"/>
</dbReference>
<dbReference type="PANTHER" id="PTHR11715">
    <property type="entry name" value="GLYCINE CLEAVAGE SYSTEM H PROTEIN"/>
    <property type="match status" value="1"/>
</dbReference>
<dbReference type="PANTHER" id="PTHR11715:SF3">
    <property type="entry name" value="GLYCINE CLEAVAGE SYSTEM H PROTEIN-RELATED"/>
    <property type="match status" value="1"/>
</dbReference>
<dbReference type="Pfam" id="PF01597">
    <property type="entry name" value="GCV_H"/>
    <property type="match status" value="1"/>
</dbReference>
<dbReference type="SUPFAM" id="SSF51230">
    <property type="entry name" value="Single hybrid motif"/>
    <property type="match status" value="1"/>
</dbReference>
<dbReference type="PROSITE" id="PS50968">
    <property type="entry name" value="BIOTINYL_LIPOYL"/>
    <property type="match status" value="1"/>
</dbReference>
<dbReference type="PROSITE" id="PS00189">
    <property type="entry name" value="LIPOYL"/>
    <property type="match status" value="1"/>
</dbReference>
<accession>O84284</accession>
<reference key="1">
    <citation type="journal article" date="1998" name="Science">
        <title>Genome sequence of an obligate intracellular pathogen of humans: Chlamydia trachomatis.</title>
        <authorList>
            <person name="Stephens R.S."/>
            <person name="Kalman S."/>
            <person name="Lammel C.J."/>
            <person name="Fan J."/>
            <person name="Marathe R."/>
            <person name="Aravind L."/>
            <person name="Mitchell W.P."/>
            <person name="Olinger L."/>
            <person name="Tatusov R.L."/>
            <person name="Zhao Q."/>
            <person name="Koonin E.V."/>
            <person name="Davis R.W."/>
        </authorList>
    </citation>
    <scope>NUCLEOTIDE SEQUENCE [LARGE SCALE GENOMIC DNA]</scope>
    <source>
        <strain>ATCC VR-885 / DSM 19411 / UW-3/Cx</strain>
    </source>
</reference>
<evidence type="ECO:0000255" key="1">
    <source>
        <dbReference type="PROSITE-ProRule" id="PRU01066"/>
    </source>
</evidence>
<evidence type="ECO:0000305" key="2"/>
<evidence type="ECO:0000312" key="3">
    <source>
        <dbReference type="EMBL" id="AAC67875.1"/>
    </source>
</evidence>
<comment type="cofactor">
    <cofactor evidence="1">
        <name>(R)-lipoate</name>
        <dbReference type="ChEBI" id="CHEBI:83088"/>
    </cofactor>
    <text evidence="1">Binds 1 lipoyl cofactor covalently.</text>
</comment>
<comment type="similarity">
    <text evidence="2">Belongs to the GcvH family.</text>
</comment>
<feature type="chain" id="PRO_0000166215" description="Glycine cleavage system H-like protein">
    <location>
        <begin position="1"/>
        <end position="117"/>
    </location>
</feature>
<feature type="domain" description="Lipoyl-binding" evidence="1">
    <location>
        <begin position="21"/>
        <end position="103"/>
    </location>
</feature>
<feature type="modified residue" description="N6-lipoyllysine" evidence="1">
    <location>
        <position position="62"/>
    </location>
</feature>